<evidence type="ECO:0000250" key="1"/>
<evidence type="ECO:0000250" key="2">
    <source>
        <dbReference type="UniProtKB" id="Q6Q0N1"/>
    </source>
</evidence>
<evidence type="ECO:0000250" key="3">
    <source>
        <dbReference type="UniProtKB" id="Q96KP4"/>
    </source>
</evidence>
<evidence type="ECO:0000250" key="4">
    <source>
        <dbReference type="UniProtKB" id="Q9D1A2"/>
    </source>
</evidence>
<evidence type="ECO:0000305" key="5"/>
<proteinExistence type="evidence at transcript level"/>
<sequence length="475" mass="52655">MSALTTLFKYVDENQDRYVKKLAEWVAIQSVSAWPEKRGEIRRMMEVAAADIKQLGGSVQLVDIGTQKLPDGSEIPLPPILLGKLGSDPQKKTVCIYGHLDVQPAALEDGWDSEPFTLVERDGKLFGRGATDDKGPVAGWINALEAFQKTKQEVPVNVRFCLEGMEESGSEGLDALIFAQKDAFFKDVDYVCISDNYWLGKNKPCITYGLRGICYFFIEVECSDKDLHSGVYGGSVHEAMTDLIMLMGCLMDKKGKILIPGISEAVAPVTEEELELYDKIDFDLEEYARDVGAGTLLHGCKKDILMHRWRYPSLSLHGIEGAFSGSGAKTVIPRKVVGKFSIRLVPNMTPEVVSEQVTSYLTKKFAELHSPNKFKVYMGHGGKPWVSDFNHPHYLAGRRALKTVFGVEPDLTREGGSIPVTLTFQEATGKNVMLLPVGSADDGAHSQNEKLNRRNYIEGTKMLAAYLYEVSQLKD</sequence>
<organism>
    <name type="scientific">Bos taurus</name>
    <name type="common">Bovine</name>
    <dbReference type="NCBI Taxonomy" id="9913"/>
    <lineage>
        <taxon>Eukaryota</taxon>
        <taxon>Metazoa</taxon>
        <taxon>Chordata</taxon>
        <taxon>Craniata</taxon>
        <taxon>Vertebrata</taxon>
        <taxon>Euteleostomi</taxon>
        <taxon>Mammalia</taxon>
        <taxon>Eutheria</taxon>
        <taxon>Laurasiatheria</taxon>
        <taxon>Artiodactyla</taxon>
        <taxon>Ruminantia</taxon>
        <taxon>Pecora</taxon>
        <taxon>Bovidae</taxon>
        <taxon>Bovinae</taxon>
        <taxon>Bos</taxon>
    </lineage>
</organism>
<keyword id="KW-0007">Acetylation</keyword>
<keyword id="KW-0121">Carboxypeptidase</keyword>
<keyword id="KW-0963">Cytoplasm</keyword>
<keyword id="KW-0378">Hydrolase</keyword>
<keyword id="KW-0464">Manganese</keyword>
<keyword id="KW-0479">Metal-binding</keyword>
<keyword id="KW-0482">Metalloprotease</keyword>
<keyword id="KW-0597">Phosphoprotein</keyword>
<keyword id="KW-0645">Protease</keyword>
<keyword id="KW-1185">Reference proteome</keyword>
<protein>
    <recommendedName>
        <fullName>Cytosolic non-specific dipeptidase</fullName>
        <ecNumber evidence="3 4">3.4.13.18</ecNumber>
    </recommendedName>
    <alternativeName>
        <fullName>CNDP dipeptidase 2</fullName>
    </alternativeName>
    <alternativeName>
        <fullName evidence="4">Threonyl dipeptidase</fullName>
    </alternativeName>
</protein>
<feature type="chain" id="PRO_0000284970" description="Cytosolic non-specific dipeptidase">
    <location>
        <begin position="1"/>
        <end position="475"/>
    </location>
</feature>
<feature type="active site" evidence="1">
    <location>
        <position position="101"/>
    </location>
</feature>
<feature type="active site" description="Proton acceptor" evidence="1">
    <location>
        <position position="166"/>
    </location>
</feature>
<feature type="binding site" evidence="3">
    <location>
        <position position="99"/>
    </location>
    <ligand>
        <name>Mn(2+)</name>
        <dbReference type="ChEBI" id="CHEBI:29035"/>
        <label>2</label>
    </ligand>
</feature>
<feature type="binding site" evidence="3">
    <location>
        <position position="132"/>
    </location>
    <ligand>
        <name>Mn(2+)</name>
        <dbReference type="ChEBI" id="CHEBI:29035"/>
        <label>1</label>
    </ligand>
</feature>
<feature type="binding site" evidence="3">
    <location>
        <position position="132"/>
    </location>
    <ligand>
        <name>Mn(2+)</name>
        <dbReference type="ChEBI" id="CHEBI:29035"/>
        <label>2</label>
    </ligand>
</feature>
<feature type="binding site" description="in other chain" evidence="1">
    <location>
        <begin position="166"/>
        <end position="167"/>
    </location>
    <ligand>
        <name>substrate</name>
        <note>ligand shared between homodimeric partners</note>
    </ligand>
</feature>
<feature type="binding site" evidence="3">
    <location>
        <position position="167"/>
    </location>
    <ligand>
        <name>Mn(2+)</name>
        <dbReference type="ChEBI" id="CHEBI:29035"/>
        <label>1</label>
    </ligand>
</feature>
<feature type="binding site" evidence="3">
    <location>
        <position position="195"/>
    </location>
    <ligand>
        <name>Mn(2+)</name>
        <dbReference type="ChEBI" id="CHEBI:29035"/>
        <label>2</label>
    </ligand>
</feature>
<feature type="binding site" description="in other chain" evidence="1">
    <location>
        <position position="195"/>
    </location>
    <ligand>
        <name>substrate</name>
        <note>ligand shared between homodimeric partners</note>
    </ligand>
</feature>
<feature type="binding site" evidence="1">
    <location>
        <position position="228"/>
    </location>
    <ligand>
        <name>substrate</name>
        <note>ligand shared between homodimeric partners</note>
    </ligand>
</feature>
<feature type="binding site" evidence="1">
    <location>
        <position position="330"/>
    </location>
    <ligand>
        <name>substrate</name>
        <note>ligand shared between homodimeric partners</note>
    </ligand>
</feature>
<feature type="binding site" description="in other chain" evidence="1">
    <location>
        <position position="343"/>
    </location>
    <ligand>
        <name>substrate</name>
        <note>ligand shared between homodimeric partners</note>
    </ligand>
</feature>
<feature type="binding site" description="in other chain" evidence="1">
    <location>
        <position position="417"/>
    </location>
    <ligand>
        <name>substrate</name>
        <note>ligand shared between homodimeric partners</note>
    </ligand>
</feature>
<feature type="binding site" evidence="3">
    <location>
        <position position="445"/>
    </location>
    <ligand>
        <name>Mn(2+)</name>
        <dbReference type="ChEBI" id="CHEBI:29035"/>
        <label>1</label>
    </ligand>
</feature>
<feature type="binding site" description="in other chain" evidence="1">
    <location>
        <position position="445"/>
    </location>
    <ligand>
        <name>substrate</name>
        <note>ligand shared between homodimeric partners</note>
    </ligand>
</feature>
<feature type="site" description="Important for catalytic activity" evidence="1">
    <location>
        <position position="228"/>
    </location>
</feature>
<feature type="modified residue" description="N6-acetyllysine" evidence="3">
    <location>
        <position position="9"/>
    </location>
</feature>
<feature type="modified residue" description="Phosphoserine" evidence="2">
    <location>
        <position position="58"/>
    </location>
</feature>
<dbReference type="EC" id="3.4.13.18" evidence="3 4"/>
<dbReference type="EMBL" id="BC102835">
    <property type="protein sequence ID" value="AAI02836.1"/>
    <property type="molecule type" value="mRNA"/>
</dbReference>
<dbReference type="RefSeq" id="NP_001030280.1">
    <property type="nucleotide sequence ID" value="NM_001035108.1"/>
</dbReference>
<dbReference type="RefSeq" id="XP_005223983.1">
    <property type="nucleotide sequence ID" value="XM_005223926.4"/>
</dbReference>
<dbReference type="RefSeq" id="XP_005223984.1">
    <property type="nucleotide sequence ID" value="XM_005223927.5"/>
</dbReference>
<dbReference type="SMR" id="Q3ZC84"/>
<dbReference type="FunCoup" id="Q3ZC84">
    <property type="interactions" value="2046"/>
</dbReference>
<dbReference type="STRING" id="9913.ENSBTAP00000031070"/>
<dbReference type="MEROPS" id="M20.005"/>
<dbReference type="PaxDb" id="9913-ENSBTAP00000031070"/>
<dbReference type="PeptideAtlas" id="Q3ZC84"/>
<dbReference type="GeneID" id="512626"/>
<dbReference type="KEGG" id="bta:512626"/>
<dbReference type="CTD" id="55748"/>
<dbReference type="VEuPathDB" id="HostDB:ENSBTAG00000009841"/>
<dbReference type="eggNOG" id="KOG2276">
    <property type="taxonomic scope" value="Eukaryota"/>
</dbReference>
<dbReference type="HOGENOM" id="CLU_029469_3_1_1"/>
<dbReference type="InParanoid" id="Q3ZC84"/>
<dbReference type="OMA" id="CNVKFMI"/>
<dbReference type="OrthoDB" id="7832001at2759"/>
<dbReference type="TreeFam" id="TF300633"/>
<dbReference type="Reactome" id="R-BTA-174403">
    <property type="pathway name" value="Glutathione synthesis and recycling"/>
</dbReference>
<dbReference type="Reactome" id="R-BTA-9753281">
    <property type="pathway name" value="Paracetamol ADME"/>
</dbReference>
<dbReference type="Proteomes" id="UP000009136">
    <property type="component" value="Chromosome 24"/>
</dbReference>
<dbReference type="Bgee" id="ENSBTAG00000009841">
    <property type="expression patterns" value="Expressed in cortex of kidney and 105 other cell types or tissues"/>
</dbReference>
<dbReference type="GO" id="GO:0005829">
    <property type="term" value="C:cytosol"/>
    <property type="evidence" value="ECO:0000318"/>
    <property type="project" value="GO_Central"/>
</dbReference>
<dbReference type="GO" id="GO:0004180">
    <property type="term" value="F:carboxypeptidase activity"/>
    <property type="evidence" value="ECO:0007669"/>
    <property type="project" value="UniProtKB-KW"/>
</dbReference>
<dbReference type="GO" id="GO:0016805">
    <property type="term" value="F:dipeptidase activity"/>
    <property type="evidence" value="ECO:0000318"/>
    <property type="project" value="GO_Central"/>
</dbReference>
<dbReference type="GO" id="GO:0046872">
    <property type="term" value="F:metal ion binding"/>
    <property type="evidence" value="ECO:0007669"/>
    <property type="project" value="UniProtKB-KW"/>
</dbReference>
<dbReference type="GO" id="GO:0070573">
    <property type="term" value="F:metallodipeptidase activity"/>
    <property type="evidence" value="ECO:0007669"/>
    <property type="project" value="InterPro"/>
</dbReference>
<dbReference type="GO" id="GO:0006508">
    <property type="term" value="P:proteolysis"/>
    <property type="evidence" value="ECO:0000318"/>
    <property type="project" value="GO_Central"/>
</dbReference>
<dbReference type="CDD" id="cd05676">
    <property type="entry name" value="M20_dipept_like_CNDP"/>
    <property type="match status" value="1"/>
</dbReference>
<dbReference type="FunFam" id="3.30.70.360:FF:000008">
    <property type="entry name" value="Cytosolic non-specific dipeptidase"/>
    <property type="match status" value="1"/>
</dbReference>
<dbReference type="FunFam" id="3.40.630.10:FF:000014">
    <property type="entry name" value="Cytosolic non-specific dipeptidase"/>
    <property type="match status" value="1"/>
</dbReference>
<dbReference type="Gene3D" id="3.30.70.360">
    <property type="match status" value="1"/>
</dbReference>
<dbReference type="Gene3D" id="3.40.630.10">
    <property type="entry name" value="Zn peptidases"/>
    <property type="match status" value="1"/>
</dbReference>
<dbReference type="InterPro" id="IPR001261">
    <property type="entry name" value="ArgE/DapE_CS"/>
</dbReference>
<dbReference type="InterPro" id="IPR017153">
    <property type="entry name" value="CNDP/DUG1"/>
</dbReference>
<dbReference type="InterPro" id="IPR051458">
    <property type="entry name" value="Cyt/Met_Dipeptidase"/>
</dbReference>
<dbReference type="InterPro" id="IPR002933">
    <property type="entry name" value="Peptidase_M20"/>
</dbReference>
<dbReference type="InterPro" id="IPR011650">
    <property type="entry name" value="Peptidase_M20_dimer"/>
</dbReference>
<dbReference type="PANTHER" id="PTHR43270">
    <property type="entry name" value="BETA-ALA-HIS DIPEPTIDASE"/>
    <property type="match status" value="1"/>
</dbReference>
<dbReference type="PANTHER" id="PTHR43270:SF11">
    <property type="entry name" value="CYTOSOLIC NON-SPECIFIC DIPEPTIDASE"/>
    <property type="match status" value="1"/>
</dbReference>
<dbReference type="Pfam" id="PF07687">
    <property type="entry name" value="M20_dimer"/>
    <property type="match status" value="1"/>
</dbReference>
<dbReference type="Pfam" id="PF01546">
    <property type="entry name" value="Peptidase_M20"/>
    <property type="match status" value="1"/>
</dbReference>
<dbReference type="PIRSF" id="PIRSF037242">
    <property type="entry name" value="CNDP_dipeptidase"/>
    <property type="match status" value="1"/>
</dbReference>
<dbReference type="SUPFAM" id="SSF53187">
    <property type="entry name" value="Zn-dependent exopeptidases"/>
    <property type="match status" value="1"/>
</dbReference>
<dbReference type="PROSITE" id="PS00759">
    <property type="entry name" value="ARGE_DAPE_CPG2_2"/>
    <property type="match status" value="1"/>
</dbReference>
<gene>
    <name type="primary">CNDP2</name>
</gene>
<comment type="function">
    <text evidence="3 4">Catalyzes the peptide bond hydrolysis in dipeptides, displaying a non-redundant activity toward threonyl dipeptides. Mediates threonyl dipeptide catabolism in a tissue-specific way (By similarity). Has high dipeptidase activity toward cysteinylglycine, an intermediate metabolite in glutathione metabolism. Metabolizes N-lactoyl-amino acids, both through hydrolysis to form lactic acid and amino acids, as well as through their formation by reverse proteolysis. Plays a role in the regulation of cell cycle arrest and apoptosis (By similarity).</text>
</comment>
<comment type="catalytic activity">
    <reaction evidence="3">
        <text>Hydrolysis of dipeptides, preferentially hydrophobic dipeptides including prolyl amino acids.</text>
        <dbReference type="EC" id="3.4.13.18"/>
    </reaction>
</comment>
<comment type="catalytic activity">
    <reaction evidence="4">
        <text>L-threonyl-L-threonine + H2O = 2 L-threonine</text>
        <dbReference type="Rhea" id="RHEA:67360"/>
        <dbReference type="ChEBI" id="CHEBI:15377"/>
        <dbReference type="ChEBI" id="CHEBI:57926"/>
        <dbReference type="ChEBI" id="CHEBI:169953"/>
    </reaction>
    <physiologicalReaction direction="left-to-right" evidence="4">
        <dbReference type="Rhea" id="RHEA:67361"/>
    </physiologicalReaction>
</comment>
<comment type="catalytic activity">
    <reaction evidence="4">
        <text>L-threonyl-L-serine + H2O = L-threonine + L-serine</text>
        <dbReference type="Rhea" id="RHEA:67364"/>
        <dbReference type="ChEBI" id="CHEBI:15377"/>
        <dbReference type="ChEBI" id="CHEBI:33384"/>
        <dbReference type="ChEBI" id="CHEBI:57926"/>
        <dbReference type="ChEBI" id="CHEBI:169954"/>
    </reaction>
    <physiologicalReaction direction="left-to-right" evidence="4">
        <dbReference type="Rhea" id="RHEA:67365"/>
    </physiologicalReaction>
</comment>
<comment type="catalytic activity">
    <reaction evidence="4">
        <text>L-seryl-L-threonine + H2O = L-threonine + L-serine</text>
        <dbReference type="Rhea" id="RHEA:67372"/>
        <dbReference type="ChEBI" id="CHEBI:15377"/>
        <dbReference type="ChEBI" id="CHEBI:33384"/>
        <dbReference type="ChEBI" id="CHEBI:57926"/>
        <dbReference type="ChEBI" id="CHEBI:169955"/>
    </reaction>
    <physiologicalReaction direction="left-to-right" evidence="4">
        <dbReference type="Rhea" id="RHEA:67373"/>
    </physiologicalReaction>
</comment>
<comment type="catalytic activity">
    <reaction evidence="3">
        <text>L-cysteinylglycine + H2O = L-cysteine + glycine</text>
        <dbReference type="Rhea" id="RHEA:28783"/>
        <dbReference type="ChEBI" id="CHEBI:15377"/>
        <dbReference type="ChEBI" id="CHEBI:35235"/>
        <dbReference type="ChEBI" id="CHEBI:57305"/>
        <dbReference type="ChEBI" id="CHEBI:61694"/>
    </reaction>
    <physiologicalReaction direction="left-to-right" evidence="3">
        <dbReference type="Rhea" id="RHEA:28784"/>
    </physiologicalReaction>
</comment>
<comment type="catalytic activity">
    <reaction evidence="3">
        <text>L-alanyl-L-cysteine + H2O = L-cysteine + L-alanine</text>
        <dbReference type="Rhea" id="RHEA:67380"/>
        <dbReference type="ChEBI" id="CHEBI:15377"/>
        <dbReference type="ChEBI" id="CHEBI:35235"/>
        <dbReference type="ChEBI" id="CHEBI:57972"/>
        <dbReference type="ChEBI" id="CHEBI:169958"/>
    </reaction>
    <physiologicalReaction direction="left-to-right" evidence="3">
        <dbReference type="Rhea" id="RHEA:67381"/>
    </physiologicalReaction>
</comment>
<comment type="catalytic activity">
    <reaction evidence="3">
        <text>(S)-lactate + L-phenylalanine = N-[(S)-lactoyl]-L-phenylalanine + H2O</text>
        <dbReference type="Rhea" id="RHEA:66724"/>
        <dbReference type="ChEBI" id="CHEBI:15377"/>
        <dbReference type="ChEBI" id="CHEBI:16651"/>
        <dbReference type="ChEBI" id="CHEBI:58095"/>
        <dbReference type="ChEBI" id="CHEBI:167456"/>
    </reaction>
    <physiologicalReaction direction="left-to-right" evidence="3">
        <dbReference type="Rhea" id="RHEA:66725"/>
    </physiologicalReaction>
    <physiologicalReaction direction="right-to-left" evidence="3">
        <dbReference type="Rhea" id="RHEA:66726"/>
    </physiologicalReaction>
</comment>
<comment type="cofactor">
    <cofactor evidence="3">
        <name>Mn(2+)</name>
        <dbReference type="ChEBI" id="CHEBI:29035"/>
    </cofactor>
    <text evidence="3">Binds 2 manganese ions per subunit.</text>
</comment>
<comment type="subunit">
    <text evidence="3">Homodimer.</text>
</comment>
<comment type="subcellular location">
    <subcellularLocation>
        <location evidence="3">Cytoplasm</location>
    </subcellularLocation>
</comment>
<comment type="similarity">
    <text evidence="5">Belongs to the peptidase M20A family.</text>
</comment>
<name>CNDP2_BOVIN</name>
<reference key="1">
    <citation type="submission" date="2005-08" db="EMBL/GenBank/DDBJ databases">
        <authorList>
            <consortium name="NIH - Mammalian Gene Collection (MGC) project"/>
        </authorList>
    </citation>
    <scope>NUCLEOTIDE SEQUENCE [LARGE SCALE MRNA]</scope>
    <source>
        <strain>Crossbred X Angus</strain>
        <tissue>Ileum</tissue>
    </source>
</reference>
<accession>Q3ZC84</accession>